<evidence type="ECO:0000255" key="1">
    <source>
        <dbReference type="HAMAP-Rule" id="MF_00503"/>
    </source>
</evidence>
<evidence type="ECO:0000305" key="2"/>
<name>RK9_PYRYE</name>
<proteinExistence type="inferred from homology"/>
<accession>Q1XDF2</accession>
<gene>
    <name evidence="1" type="primary">rpl9</name>
</gene>
<organism>
    <name type="scientific">Pyropia yezoensis</name>
    <name type="common">Susabi-nori</name>
    <name type="synonym">Porphyra yezoensis</name>
    <dbReference type="NCBI Taxonomy" id="2788"/>
    <lineage>
        <taxon>Eukaryota</taxon>
        <taxon>Rhodophyta</taxon>
        <taxon>Bangiophyceae</taxon>
        <taxon>Bangiales</taxon>
        <taxon>Bangiaceae</taxon>
        <taxon>Pyropia</taxon>
    </lineage>
</organism>
<geneLocation type="chloroplast"/>
<dbReference type="EMBL" id="AP006715">
    <property type="protein sequence ID" value="BAE92459.1"/>
    <property type="molecule type" value="Genomic_DNA"/>
</dbReference>
<dbReference type="RefSeq" id="YP_537016.1">
    <property type="nucleotide sequence ID" value="NC_007932.1"/>
</dbReference>
<dbReference type="SMR" id="Q1XDF2"/>
<dbReference type="GeneID" id="3978927"/>
<dbReference type="GO" id="GO:0009507">
    <property type="term" value="C:chloroplast"/>
    <property type="evidence" value="ECO:0007669"/>
    <property type="project" value="UniProtKB-SubCell"/>
</dbReference>
<dbReference type="GO" id="GO:1990904">
    <property type="term" value="C:ribonucleoprotein complex"/>
    <property type="evidence" value="ECO:0007669"/>
    <property type="project" value="UniProtKB-KW"/>
</dbReference>
<dbReference type="GO" id="GO:0005840">
    <property type="term" value="C:ribosome"/>
    <property type="evidence" value="ECO:0007669"/>
    <property type="project" value="UniProtKB-KW"/>
</dbReference>
<dbReference type="GO" id="GO:0019843">
    <property type="term" value="F:rRNA binding"/>
    <property type="evidence" value="ECO:0007669"/>
    <property type="project" value="UniProtKB-UniRule"/>
</dbReference>
<dbReference type="GO" id="GO:0003735">
    <property type="term" value="F:structural constituent of ribosome"/>
    <property type="evidence" value="ECO:0007669"/>
    <property type="project" value="InterPro"/>
</dbReference>
<dbReference type="GO" id="GO:0006412">
    <property type="term" value="P:translation"/>
    <property type="evidence" value="ECO:0007669"/>
    <property type="project" value="UniProtKB-UniRule"/>
</dbReference>
<dbReference type="Gene3D" id="3.10.430.100">
    <property type="entry name" value="Ribosomal protein L9, C-terminal domain"/>
    <property type="match status" value="1"/>
</dbReference>
<dbReference type="Gene3D" id="3.40.5.10">
    <property type="entry name" value="Ribosomal protein L9, N-terminal domain"/>
    <property type="match status" value="1"/>
</dbReference>
<dbReference type="HAMAP" id="MF_00503">
    <property type="entry name" value="Ribosomal_bL9"/>
    <property type="match status" value="1"/>
</dbReference>
<dbReference type="InterPro" id="IPR000244">
    <property type="entry name" value="Ribosomal_bL9"/>
</dbReference>
<dbReference type="InterPro" id="IPR009027">
    <property type="entry name" value="Ribosomal_bL9/RNase_H1_N"/>
</dbReference>
<dbReference type="InterPro" id="IPR020594">
    <property type="entry name" value="Ribosomal_bL9_bac/chp"/>
</dbReference>
<dbReference type="InterPro" id="IPR020069">
    <property type="entry name" value="Ribosomal_bL9_C"/>
</dbReference>
<dbReference type="InterPro" id="IPR036791">
    <property type="entry name" value="Ribosomal_bL9_C_sf"/>
</dbReference>
<dbReference type="InterPro" id="IPR020070">
    <property type="entry name" value="Ribosomal_bL9_N"/>
</dbReference>
<dbReference type="InterPro" id="IPR036935">
    <property type="entry name" value="Ribosomal_bL9_N_sf"/>
</dbReference>
<dbReference type="NCBIfam" id="TIGR00158">
    <property type="entry name" value="L9"/>
    <property type="match status" value="1"/>
</dbReference>
<dbReference type="PANTHER" id="PTHR21368">
    <property type="entry name" value="50S RIBOSOMAL PROTEIN L9"/>
    <property type="match status" value="1"/>
</dbReference>
<dbReference type="Pfam" id="PF03948">
    <property type="entry name" value="Ribosomal_L9_C"/>
    <property type="match status" value="1"/>
</dbReference>
<dbReference type="Pfam" id="PF01281">
    <property type="entry name" value="Ribosomal_L9_N"/>
    <property type="match status" value="1"/>
</dbReference>
<dbReference type="SUPFAM" id="SSF55658">
    <property type="entry name" value="L9 N-domain-like"/>
    <property type="match status" value="1"/>
</dbReference>
<dbReference type="SUPFAM" id="SSF55653">
    <property type="entry name" value="Ribosomal protein L9 C-domain"/>
    <property type="match status" value="1"/>
</dbReference>
<dbReference type="PROSITE" id="PS00651">
    <property type="entry name" value="RIBOSOMAL_L9"/>
    <property type="match status" value="1"/>
</dbReference>
<feature type="chain" id="PRO_0000236627" description="Large ribosomal subunit protein bL9c">
    <location>
        <begin position="1"/>
        <end position="155"/>
    </location>
</feature>
<protein>
    <recommendedName>
        <fullName evidence="1">Large ribosomal subunit protein bL9c</fullName>
    </recommendedName>
    <alternativeName>
        <fullName evidence="2">50S ribosomal protein L9, chloroplastic</fullName>
    </alternativeName>
</protein>
<sequence>MSKKVINVVLKENIQKLGKSNDVIKVASGYARNFLIPNKMAAVATNGILKQQKFYAAIREEKLKTAKENAKKVKQLLEEIQRFSVSKKTGDGHNIFGSVTEKEISQIIKNTTNIDIEKQSISLPDVKTIGIYDVEIKLLHQVTANIKLQVLPESN</sequence>
<comment type="function">
    <text evidence="1">Binds to the 23S rRNA.</text>
</comment>
<comment type="subcellular location">
    <subcellularLocation>
        <location>Plastid</location>
        <location>Chloroplast</location>
    </subcellularLocation>
</comment>
<comment type="similarity">
    <text evidence="1">Belongs to the bacterial ribosomal protein bL9 family.</text>
</comment>
<keyword id="KW-0150">Chloroplast</keyword>
<keyword id="KW-0934">Plastid</keyword>
<keyword id="KW-0687">Ribonucleoprotein</keyword>
<keyword id="KW-0689">Ribosomal protein</keyword>
<keyword id="KW-0694">RNA-binding</keyword>
<keyword id="KW-0699">rRNA-binding</keyword>
<reference key="1">
    <citation type="submission" date="2003-11" db="EMBL/GenBank/DDBJ databases">
        <title>Whole genome sequence of Porphyra yezoensis chloroplast.</title>
        <authorList>
            <person name="Kunimoto M."/>
            <person name="Morishima K."/>
            <person name="Yoshikawa M."/>
            <person name="Fukuda S."/>
            <person name="Kobayashi T."/>
            <person name="Kobayashi M."/>
            <person name="Okazaki T."/>
            <person name="Ohara I."/>
            <person name="Nakayama I."/>
        </authorList>
    </citation>
    <scope>NUCLEOTIDE SEQUENCE [LARGE SCALE GENOMIC DNA]</scope>
    <source>
        <strain>U-51</strain>
    </source>
</reference>